<keyword id="KW-0010">Activator</keyword>
<keyword id="KW-0217">Developmental protein</keyword>
<keyword id="KW-0238">DNA-binding</keyword>
<keyword id="KW-0539">Nucleus</keyword>
<keyword id="KW-1185">Reference proteome</keyword>
<keyword id="KW-0678">Repressor</keyword>
<keyword id="KW-0804">Transcription</keyword>
<keyword id="KW-0805">Transcription regulation</keyword>
<keyword id="KW-0832">Ubl conjugation</keyword>
<name>TCP14_ARATH</name>
<feature type="chain" id="PRO_0000330788" description="Transcription factor TCP14">
    <location>
        <begin position="1"/>
        <end position="489"/>
    </location>
</feature>
<feature type="domain" description="TCP" evidence="1">
    <location>
        <begin position="117"/>
        <end position="171"/>
    </location>
</feature>
<feature type="region of interest" description="Disordered" evidence="2">
    <location>
        <begin position="1"/>
        <end position="125"/>
    </location>
</feature>
<feature type="region of interest" description="Disordered" evidence="2">
    <location>
        <begin position="257"/>
        <end position="314"/>
    </location>
</feature>
<feature type="region of interest" description="Disordered" evidence="2">
    <location>
        <begin position="422"/>
        <end position="489"/>
    </location>
</feature>
<feature type="compositionally biased region" description="Low complexity" evidence="2">
    <location>
        <begin position="54"/>
        <end position="101"/>
    </location>
</feature>
<feature type="compositionally biased region" description="Basic and acidic residues" evidence="2">
    <location>
        <begin position="116"/>
        <end position="125"/>
    </location>
</feature>
<feature type="compositionally biased region" description="Polar residues" evidence="2">
    <location>
        <begin position="257"/>
        <end position="268"/>
    </location>
</feature>
<feature type="compositionally biased region" description="Polar residues" evidence="2">
    <location>
        <begin position="422"/>
        <end position="432"/>
    </location>
</feature>
<feature type="compositionally biased region" description="Basic and acidic residues" evidence="2">
    <location>
        <begin position="433"/>
        <end position="443"/>
    </location>
</feature>
<feature type="compositionally biased region" description="Basic residues" evidence="2">
    <location>
        <begin position="444"/>
        <end position="457"/>
    </location>
</feature>
<feature type="compositionally biased region" description="Polar residues" evidence="2">
    <location>
        <begin position="460"/>
        <end position="477"/>
    </location>
</feature>
<feature type="mutagenesis site" description="Unable to interact with the Pseudomonas syringae type III effector HopBB1." evidence="10">
    <original>RSAAST</original>
    <variation>NAAIRS</variation>
    <location>
        <begin position="202"/>
        <end position="207"/>
    </location>
</feature>
<evidence type="ECO:0000255" key="1">
    <source>
        <dbReference type="PROSITE-ProRule" id="PRU00701"/>
    </source>
</evidence>
<evidence type="ECO:0000256" key="2">
    <source>
        <dbReference type="SAM" id="MobiDB-lite"/>
    </source>
</evidence>
<evidence type="ECO:0000269" key="3">
    <source>
    </source>
</evidence>
<evidence type="ECO:0000269" key="4">
    <source>
    </source>
</evidence>
<evidence type="ECO:0000269" key="5">
    <source>
    </source>
</evidence>
<evidence type="ECO:0000269" key="6">
    <source>
    </source>
</evidence>
<evidence type="ECO:0000269" key="7">
    <source>
    </source>
</evidence>
<evidence type="ECO:0000269" key="8">
    <source>
    </source>
</evidence>
<evidence type="ECO:0000269" key="9">
    <source>
    </source>
</evidence>
<evidence type="ECO:0000269" key="10">
    <source>
    </source>
</evidence>
<evidence type="ECO:0000269" key="11">
    <source>
    </source>
</evidence>
<evidence type="ECO:0000269" key="12">
    <source>
    </source>
</evidence>
<evidence type="ECO:0000269" key="13">
    <source>
    </source>
</evidence>
<evidence type="ECO:0000303" key="14">
    <source>
    </source>
</evidence>
<evidence type="ECO:0000303" key="15">
    <source>
    </source>
</evidence>
<evidence type="ECO:0000305" key="16"/>
<evidence type="ECO:0000305" key="17">
    <source>
    </source>
</evidence>
<evidence type="ECO:0000312" key="18">
    <source>
        <dbReference type="Araport" id="AT3G47620"/>
    </source>
</evidence>
<evidence type="ECO:0000312" key="19">
    <source>
        <dbReference type="EMBL" id="CAB61988.1"/>
    </source>
</evidence>
<dbReference type="EMBL" id="AL132955">
    <property type="protein sequence ID" value="CAB61988.1"/>
    <property type="status" value="ALT_INIT"/>
    <property type="molecule type" value="Genomic_DNA"/>
</dbReference>
<dbReference type="EMBL" id="CP002686">
    <property type="protein sequence ID" value="AEE78308.1"/>
    <property type="molecule type" value="Genomic_DNA"/>
</dbReference>
<dbReference type="EMBL" id="AY058874">
    <property type="protein sequence ID" value="AAL24261.1"/>
    <property type="molecule type" value="mRNA"/>
</dbReference>
<dbReference type="EMBL" id="AY103304">
    <property type="protein sequence ID" value="AAM65356.1"/>
    <property type="molecule type" value="mRNA"/>
</dbReference>
<dbReference type="PIR" id="T45722">
    <property type="entry name" value="T45722"/>
</dbReference>
<dbReference type="RefSeq" id="NP_190346.2">
    <property type="nucleotide sequence ID" value="NM_114630.4"/>
</dbReference>
<dbReference type="SMR" id="Q93Z00"/>
<dbReference type="BioGRID" id="9236">
    <property type="interactions" value="318"/>
</dbReference>
<dbReference type="FunCoup" id="Q93Z00">
    <property type="interactions" value="272"/>
</dbReference>
<dbReference type="IntAct" id="Q93Z00">
    <property type="interactions" value="389"/>
</dbReference>
<dbReference type="STRING" id="3702.Q93Z00"/>
<dbReference type="GlyGen" id="Q93Z00">
    <property type="glycosylation" value="2 sites, 1 O-linked glycan (2 sites)"/>
</dbReference>
<dbReference type="iPTMnet" id="Q93Z00"/>
<dbReference type="PaxDb" id="3702-AT3G47620.1"/>
<dbReference type="ProteomicsDB" id="234200"/>
<dbReference type="EnsemblPlants" id="AT3G47620.1">
    <property type="protein sequence ID" value="AT3G47620.1"/>
    <property type="gene ID" value="AT3G47620"/>
</dbReference>
<dbReference type="GeneID" id="823916"/>
<dbReference type="Gramene" id="AT3G47620.1">
    <property type="protein sequence ID" value="AT3G47620.1"/>
    <property type="gene ID" value="AT3G47620"/>
</dbReference>
<dbReference type="KEGG" id="ath:AT3G47620"/>
<dbReference type="Araport" id="AT3G47620"/>
<dbReference type="TAIR" id="AT3G47620">
    <property type="gene designation" value="TCP14"/>
</dbReference>
<dbReference type="eggNOG" id="ENOG502QU5R">
    <property type="taxonomic scope" value="Eukaryota"/>
</dbReference>
<dbReference type="HOGENOM" id="CLU_025170_0_0_1"/>
<dbReference type="InParanoid" id="Q93Z00"/>
<dbReference type="OMA" id="EDDNQPC"/>
<dbReference type="PhylomeDB" id="Q93Z00"/>
<dbReference type="PRO" id="PR:Q93Z00"/>
<dbReference type="Proteomes" id="UP000006548">
    <property type="component" value="Chromosome 3"/>
</dbReference>
<dbReference type="ExpressionAtlas" id="Q93Z00">
    <property type="expression patterns" value="baseline and differential"/>
</dbReference>
<dbReference type="GO" id="GO:0005634">
    <property type="term" value="C:nucleus"/>
    <property type="evidence" value="ECO:0000314"/>
    <property type="project" value="TAIR"/>
</dbReference>
<dbReference type="GO" id="GO:0003700">
    <property type="term" value="F:DNA-binding transcription factor activity"/>
    <property type="evidence" value="ECO:0000314"/>
    <property type="project" value="UniProtKB"/>
</dbReference>
<dbReference type="GO" id="GO:0043565">
    <property type="term" value="F:sequence-specific DNA binding"/>
    <property type="evidence" value="ECO:0000314"/>
    <property type="project" value="UniProtKB"/>
</dbReference>
<dbReference type="GO" id="GO:0000976">
    <property type="term" value="F:transcription cis-regulatory region binding"/>
    <property type="evidence" value="ECO:0000314"/>
    <property type="project" value="UniProtKB"/>
</dbReference>
<dbReference type="GO" id="GO:0010229">
    <property type="term" value="P:inflorescence development"/>
    <property type="evidence" value="ECO:0000316"/>
    <property type="project" value="TAIR"/>
</dbReference>
<dbReference type="GO" id="GO:0045893">
    <property type="term" value="P:positive regulation of DNA-templated transcription"/>
    <property type="evidence" value="ECO:0000314"/>
    <property type="project" value="UniProtKB"/>
</dbReference>
<dbReference type="GO" id="GO:0031347">
    <property type="term" value="P:regulation of defense response"/>
    <property type="evidence" value="ECO:0000315"/>
    <property type="project" value="TAIR"/>
</dbReference>
<dbReference type="GO" id="GO:0006355">
    <property type="term" value="P:regulation of DNA-templated transcription"/>
    <property type="evidence" value="ECO:0000304"/>
    <property type="project" value="TAIR"/>
</dbReference>
<dbReference type="GO" id="GO:0010029">
    <property type="term" value="P:regulation of seed germination"/>
    <property type="evidence" value="ECO:0000270"/>
    <property type="project" value="TAIR"/>
</dbReference>
<dbReference type="GO" id="GO:0009737">
    <property type="term" value="P:response to abscisic acid"/>
    <property type="evidence" value="ECO:0000315"/>
    <property type="project" value="TAIR"/>
</dbReference>
<dbReference type="GO" id="GO:0009735">
    <property type="term" value="P:response to cytokinin"/>
    <property type="evidence" value="ECO:0000315"/>
    <property type="project" value="TAIR"/>
</dbReference>
<dbReference type="GO" id="GO:0009739">
    <property type="term" value="P:response to gibberellin"/>
    <property type="evidence" value="ECO:0000315"/>
    <property type="project" value="TAIR"/>
</dbReference>
<dbReference type="InterPro" id="IPR017887">
    <property type="entry name" value="TF_TCP_subgr"/>
</dbReference>
<dbReference type="InterPro" id="IPR005333">
    <property type="entry name" value="Transcription_factor_TCP"/>
</dbReference>
<dbReference type="PANTHER" id="PTHR31072:SF218">
    <property type="entry name" value="TRANSCRIPTION FACTOR TCP11-RELATED"/>
    <property type="match status" value="1"/>
</dbReference>
<dbReference type="PANTHER" id="PTHR31072">
    <property type="entry name" value="TRANSCRIPTION FACTOR TCP4-RELATED"/>
    <property type="match status" value="1"/>
</dbReference>
<dbReference type="Pfam" id="PF03634">
    <property type="entry name" value="TCP"/>
    <property type="match status" value="1"/>
</dbReference>
<dbReference type="PROSITE" id="PS51369">
    <property type="entry name" value="TCP"/>
    <property type="match status" value="1"/>
</dbReference>
<gene>
    <name evidence="14" type="primary">TCP14</name>
    <name evidence="18" type="ordered locus">At3g47620</name>
    <name evidence="19" type="ORF">F1P2.170</name>
</gene>
<organism>
    <name type="scientific">Arabidopsis thaliana</name>
    <name type="common">Mouse-ear cress</name>
    <dbReference type="NCBI Taxonomy" id="3702"/>
    <lineage>
        <taxon>Eukaryota</taxon>
        <taxon>Viridiplantae</taxon>
        <taxon>Streptophyta</taxon>
        <taxon>Embryophyta</taxon>
        <taxon>Tracheophyta</taxon>
        <taxon>Spermatophyta</taxon>
        <taxon>Magnoliopsida</taxon>
        <taxon>eudicotyledons</taxon>
        <taxon>Gunneridae</taxon>
        <taxon>Pentapetalae</taxon>
        <taxon>rosids</taxon>
        <taxon>malvids</taxon>
        <taxon>Brassicales</taxon>
        <taxon>Brassicaceae</taxon>
        <taxon>Camelineae</taxon>
        <taxon>Arabidopsis</taxon>
    </lineage>
</organism>
<proteinExistence type="evidence at protein level"/>
<protein>
    <recommendedName>
        <fullName evidence="16">Transcription factor TCP14</fullName>
        <shortName evidence="15">AtTCP14</shortName>
    </recommendedName>
</protein>
<accession>Q93Z00</accession>
<accession>Q9SN76</accession>
<comment type="function">
    <text evidence="3 4 5 6 7 8 9 10 13">Transcription factor involved the regulation of plant development (PubMed:21668538). Binds to the Up1 elements (5'-GGCCCAWW-3') in early light-induced proteins (ELIPs, e.g. ELIP1 and ELIP2) promoters to trigger their expression and promote chloroplast biogenesis; this activation is inhibited by OR binding in the absence of light to prevent cotyledon greening (PubMed:31604812). Also supports OR expression (PubMed:31604812). Together with TCP15, modulates plant stature by promoting cell division in young internodes (PubMed:21668538). Represses cell proliferation in leaf and floral tissues (PubMed:21668538). Together with TCP15, acts downstream of gibberellin (GA), and the stratification pathways that promote seed germination. Involved in the control of cell proliferation at the root apical meristem (RAM) by regulating the activity of CYCB1-1 (PubMed:25655823). Involved in the regulation of seed germination. May regulate the activation of embryonic growth potential during seed germination (PubMed:17953649, PubMed:22155632). Acts together with SPY to promote cytokinin responses that affect leaf shape and trichome development in flowers (PubMed:22267487). Transcription factor involved in the regulation of endoreduplication. Represses endoreduplication by activating the gene expression of the key cell-cycle regulators RBR1 and CYCA2-3 (PubMed:25757472). Regulates the expression of the defense gene pathogenesis-related protein 2 (PR2) in antagonism to SRFR1, a negative regulator of effector-triggered immunity (PubMed:24689742). Involved in positive regulation of plant defense. Represses jasmonate (JA) response to promote disease resistance. Regulates the plant immune system by transcriptionally repressing a subset of JA-responsive genes (PubMed:28132837).</text>
</comment>
<comment type="subunit">
    <text evidence="5 6 7 8 9 10 11 12 13">Interacts with DOF3.2 (PubMed:22155632). Interacts with SPY (PubMed:22267487). Interacts with SRFR1 (PubMed:24689742). Interacts with GAI and RGL2 (PubMed:25655823). Interacts with DA1, DAR1 and DAR2 (PubMed:25757472). Interacts with the Pseudomonas syringae type III effector HopBB1 (PubMed:28132837). Interacts with SCE1 (PubMed:29250092). Interacts with MOS1 (PubMed:29086441). Associates with OR in the nucleus; this leads to the repression of its transactivation activity to inhibit chloroplast biogenesis in etiolated seedlings (PubMed:31604812).</text>
</comment>
<comment type="interaction">
    <interactant intactId="EBI-4424563">
        <id>Q93Z00</id>
    </interactant>
    <interactant intactId="EBI-979206">
        <id>Q9SFD5</id>
        <label>ADA2A</label>
    </interactant>
    <organismsDiffer>false</organismsDiffer>
    <experiments>3</experiments>
</comment>
<comment type="interaction">
    <interactant intactId="EBI-4424563">
        <id>Q93Z00</id>
    </interactant>
    <interactant intactId="EBI-617501">
        <id>Q9LPW7</id>
        <label>AFB3</label>
    </interactant>
    <organismsDiffer>false</organismsDiffer>
    <experiments>3</experiments>
</comment>
<comment type="interaction">
    <interactant intactId="EBI-4424563">
        <id>Q93Z00</id>
    </interactant>
    <interactant intactId="EBI-4463103">
        <id>Q9SLK2</id>
        <label>ALIS3</label>
    </interactant>
    <organismsDiffer>false</organismsDiffer>
    <experiments>2</experiments>
</comment>
<comment type="interaction">
    <interactant intactId="EBI-4424563">
        <id>Q93Z00</id>
    </interactant>
    <interactant intactId="EBI-592003">
        <id>P35631</id>
        <label>AP1</label>
    </interactant>
    <organismsDiffer>false</organismsDiffer>
    <experiments>3</experiments>
</comment>
<comment type="interaction">
    <interactant intactId="EBI-4424563">
        <id>Q93Z00</id>
    </interactant>
    <interactant intactId="EBI-15196539">
        <id>Q9FX77</id>
        <label>At1g16640</label>
    </interactant>
    <organismsDiffer>false</organismsDiffer>
    <experiments>3</experiments>
</comment>
<comment type="interaction">
    <interactant intactId="EBI-4424563">
        <id>Q93Z00</id>
    </interactant>
    <interactant intactId="EBI-15192249">
        <id>C0SUZ3</id>
        <label>At1g35490</label>
    </interactant>
    <organismsDiffer>false</organismsDiffer>
    <experiments>3</experiments>
</comment>
<comment type="interaction">
    <interactant intactId="EBI-4424563">
        <id>Q93Z00</id>
    </interactant>
    <interactant intactId="EBI-15196671">
        <id>Q7X887</id>
        <label>At2g02060</label>
    </interactant>
    <organismsDiffer>false</organismsDiffer>
    <experiments>3</experiments>
</comment>
<comment type="interaction">
    <interactant intactId="EBI-4424563">
        <id>Q93Z00</id>
    </interactant>
    <interactant intactId="EBI-15195933">
        <id>B3H6R4</id>
        <label>At2g36026</label>
    </interactant>
    <organismsDiffer>false</organismsDiffer>
    <experiments>3</experiments>
</comment>
<comment type="interaction">
    <interactant intactId="EBI-4424563">
        <id>Q93Z00</id>
    </interactant>
    <interactant intactId="EBI-4475455">
        <id>Q9FG01</id>
        <label>ATO</label>
    </interactant>
    <organismsDiffer>false</organismsDiffer>
    <experiments>3</experiments>
</comment>
<comment type="interaction">
    <interactant intactId="EBI-4424563">
        <id>Q93Z00</id>
    </interactant>
    <interactant intactId="EBI-4427748">
        <id>Q7XJU2</id>
        <label>BHLH153</label>
    </interactant>
    <organismsDiffer>false</organismsDiffer>
    <experiments>3</experiments>
</comment>
<comment type="interaction">
    <interactant intactId="EBI-4424563">
        <id>Q93Z00</id>
    </interactant>
    <interactant intactId="EBI-4437532">
        <id>Q9SN74</id>
        <label>BHLH47</label>
    </interactant>
    <organismsDiffer>false</organismsDiffer>
    <experiments>3</experiments>
</comment>
<comment type="interaction">
    <interactant intactId="EBI-4424563">
        <id>Q93Z00</id>
    </interactant>
    <interactant intactId="EBI-15192111">
        <id>Q8S3D1</id>
        <label>BHLH68</label>
    </interactant>
    <organismsDiffer>false</organismsDiffer>
    <experiments>3</experiments>
</comment>
<comment type="interaction">
    <interactant intactId="EBI-4424563">
        <id>Q93Z00</id>
    </interactant>
    <interactant intactId="EBI-15192637">
        <id>Q9C7T4</id>
        <label>BHLH96</label>
    </interactant>
    <organismsDiffer>false</organismsDiffer>
    <experiments>3</experiments>
</comment>
<comment type="interaction">
    <interactant intactId="EBI-4424563">
        <id>Q93Z00</id>
    </interactant>
    <interactant intactId="EBI-15193039">
        <id>Q9C9N3</id>
        <label>C3H14</label>
    </interactant>
    <organismsDiffer>false</organismsDiffer>
    <experiments>3</experiments>
</comment>
<comment type="interaction">
    <interactant intactId="EBI-4424563">
        <id>Q93Z00</id>
    </interactant>
    <interactant intactId="EBI-962511">
        <id>A9LNK9</id>
        <label>CPSF30</label>
    </interactant>
    <organismsDiffer>false</organismsDiffer>
    <experiments>3</experiments>
</comment>
<comment type="interaction">
    <interactant intactId="EBI-4424563">
        <id>Q93Z00</id>
    </interactant>
    <interactant intactId="EBI-4449948">
        <id>Q9ZQ85</id>
        <label>EFM</label>
    </interactant>
    <organismsDiffer>false</organismsDiffer>
    <experiments>3</experiments>
</comment>
<comment type="interaction">
    <interactant intactId="EBI-4424563">
        <id>Q93Z00</id>
    </interactant>
    <interactant intactId="EBI-966009">
        <id>O80340</id>
        <label>ERF4</label>
    </interactant>
    <organismsDiffer>false</organismsDiffer>
    <experiments>3</experiments>
</comment>
<comment type="interaction">
    <interactant intactId="EBI-4424563">
        <id>Q93Z00</id>
    </interactant>
    <interactant intactId="EBI-1235922">
        <id>Q8RWQ8</id>
        <label>FBX14</label>
    </interactant>
    <organismsDiffer>false</organismsDiffer>
    <experiments>3</experiments>
</comment>
<comment type="interaction">
    <interactant intactId="EBI-4424563">
        <id>Q93Z00</id>
    </interactant>
    <interactant intactId="EBI-15200862">
        <id>Q9SCQ6</id>
        <label>GAF1</label>
    </interactant>
    <organismsDiffer>false</organismsDiffer>
    <experiments>3</experiments>
</comment>
<comment type="interaction">
    <interactant intactId="EBI-4424563">
        <id>Q93Z00</id>
    </interactant>
    <interactant intactId="EBI-963606">
        <id>Q9LQT8</id>
        <label>GAI</label>
    </interactant>
    <organismsDiffer>false</organismsDiffer>
    <experiments>3</experiments>
</comment>
<comment type="interaction">
    <interactant intactId="EBI-4424563">
        <id>Q93Z00</id>
    </interactant>
    <interactant intactId="EBI-15194063">
        <id>Q9C9H1</id>
        <label>GIS3</label>
    </interactant>
    <organismsDiffer>false</organismsDiffer>
    <experiments>3</experiments>
</comment>
<comment type="interaction">
    <interactant intactId="EBI-4424563">
        <id>Q93Z00</id>
    </interactant>
    <interactant intactId="EBI-1396893">
        <id>Q8L8A8</id>
        <label>GRF2</label>
    </interactant>
    <organismsDiffer>false</organismsDiffer>
    <experiments>3</experiments>
</comment>
<comment type="interaction">
    <interactant intactId="EBI-4424563">
        <id>Q93Z00</id>
    </interactant>
    <interactant intactId="EBI-15192423">
        <id>F4JRB0-2</id>
        <label>HHO5</label>
    </interactant>
    <organismsDiffer>false</organismsDiffer>
    <experiments>3</experiments>
</comment>
<comment type="interaction">
    <interactant intactId="EBI-4424563">
        <id>Q93Z00</id>
    </interactant>
    <interactant intactId="EBI-15192145">
        <id>O22230</id>
        <label>HSFB3</label>
    </interactant>
    <organismsDiffer>false</organismsDiffer>
    <experiments>4</experiments>
</comment>
<comment type="interaction">
    <interactant intactId="EBI-4424563">
        <id>Q93Z00</id>
    </interactant>
    <interactant intactId="EBI-25519488">
        <id>Q9SZU7</id>
        <label>KAI2</label>
    </interactant>
    <organismsDiffer>false</organismsDiffer>
    <experiments>3</experiments>
</comment>
<comment type="interaction">
    <interactant intactId="EBI-4424563">
        <id>Q93Z00</id>
    </interactant>
    <interactant intactId="EBI-15201724">
        <id>O81323</id>
        <label>LBD30</label>
    </interactant>
    <organismsDiffer>false</organismsDiffer>
    <experiments>3</experiments>
</comment>
<comment type="interaction">
    <interactant intactId="EBI-4424563">
        <id>Q93Z00</id>
    </interactant>
    <interactant intactId="EBI-15193585">
        <id>Q9SN23</id>
        <label>LBD38</label>
    </interactant>
    <organismsDiffer>false</organismsDiffer>
    <experiments>3</experiments>
</comment>
<comment type="interaction">
    <interactant intactId="EBI-4424563">
        <id>Q93Z00</id>
    </interactant>
    <interactant intactId="EBI-15205450">
        <id>O80438</id>
        <label>MAK3</label>
    </interactant>
    <organismsDiffer>false</organismsDiffer>
    <experiments>4</experiments>
</comment>
<comment type="interaction">
    <interactant intactId="EBI-4424563">
        <id>Q93Z00</id>
    </interactant>
    <interactant intactId="EBI-4470510">
        <id>Q9FK45</id>
        <label>MRG7.22</label>
    </interactant>
    <organismsDiffer>false</organismsDiffer>
    <experiments>2</experiments>
</comment>
<comment type="interaction">
    <interactant intactId="EBI-4424563">
        <id>Q93Z00</id>
    </interactant>
    <interactant intactId="EBI-15191571">
        <id>Q4PSE2</id>
        <label>NFYC8</label>
    </interactant>
    <organismsDiffer>false</organismsDiffer>
    <experiments>3</experiments>
</comment>
<comment type="interaction">
    <interactant intactId="EBI-4424563">
        <id>Q93Z00</id>
    </interactant>
    <interactant intactId="EBI-1775691">
        <id>Q9FIX8</id>
        <label>PCFS5</label>
    </interactant>
    <organismsDiffer>false</organismsDiffer>
    <experiments>4</experiments>
</comment>
<comment type="interaction">
    <interactant intactId="EBI-4424563">
        <id>Q93Z00</id>
    </interactant>
    <interactant intactId="EBI-15198339">
        <id>Q9FG68</id>
        <label>RAX1</label>
    </interactant>
    <organismsDiffer>false</organismsDiffer>
    <experiments>3</experiments>
</comment>
<comment type="interaction">
    <interactant intactId="EBI-4424563">
        <id>Q93Z00</id>
    </interactant>
    <interactant intactId="EBI-963624">
        <id>Q9SLH3</id>
        <label>RGA</label>
    </interactant>
    <organismsDiffer>false</organismsDiffer>
    <experiments>3</experiments>
</comment>
<comment type="interaction">
    <interactant intactId="EBI-4424563">
        <id>Q93Z00</id>
    </interactant>
    <interactant intactId="EBI-1113588">
        <id>O81836</id>
        <label>SPL</label>
    </interactant>
    <organismsDiffer>false</organismsDiffer>
    <experiments>3</experiments>
</comment>
<comment type="interaction">
    <interactant intactId="EBI-4424563">
        <id>Q93Z00</id>
    </interactant>
    <interactant intactId="EBI-15192995">
        <id>O65517</id>
        <label>SRS2</label>
    </interactant>
    <organismsDiffer>false</organismsDiffer>
    <experiments>3</experiments>
</comment>
<comment type="interaction">
    <interactant intactId="EBI-4424563">
        <id>Q93Z00</id>
    </interactant>
    <interactant intactId="EBI-4424877">
        <id>Q9S7W5</id>
        <label>TCP13</label>
    </interactant>
    <organismsDiffer>false</organismsDiffer>
    <experiments>6</experiments>
</comment>
<comment type="interaction">
    <interactant intactId="EBI-4424563">
        <id>Q93Z00</id>
    </interactant>
    <interactant intactId="EBI-4426168">
        <id>Q9FTA2</id>
        <label>TCP21</label>
    </interactant>
    <organismsDiffer>false</organismsDiffer>
    <experiments>3</experiments>
</comment>
<comment type="interaction">
    <interactant intactId="EBI-4424563">
        <id>Q93Z00</id>
    </interactant>
    <interactant intactId="EBI-3134124">
        <id>Q9C518</id>
        <label>TCP8</label>
    </interactant>
    <organismsDiffer>false</organismsDiffer>
    <experiments>4</experiments>
</comment>
<comment type="interaction">
    <interactant intactId="EBI-4424563">
        <id>Q93Z00</id>
    </interactant>
    <interactant intactId="EBI-307183">
        <id>Q570C0</id>
        <label>TIR1</label>
    </interactant>
    <organismsDiffer>false</organismsDiffer>
    <experiments>3</experiments>
</comment>
<comment type="interaction">
    <interactant intactId="EBI-4424563">
        <id>Q93Z00</id>
    </interactant>
    <interactant intactId="EBI-15202554">
        <id>Q9FH95</id>
        <label>TOE3</label>
    </interactant>
    <organismsDiffer>false</organismsDiffer>
    <experiments>4</experiments>
</comment>
<comment type="interaction">
    <interactant intactId="EBI-4424563">
        <id>Q93Z00</id>
    </interactant>
    <interactant intactId="EBI-4459694">
        <id>Q6X7J9</id>
        <label>WOX4</label>
    </interactant>
    <organismsDiffer>false</organismsDiffer>
    <experiments>3</experiments>
</comment>
<comment type="interaction">
    <interactant intactId="EBI-4424563">
        <id>Q93Z00</id>
    </interactant>
    <interactant intactId="EBI-1115523">
        <id>Q9LDT3</id>
        <label>YAB4</label>
    </interactant>
    <organismsDiffer>false</organismsDiffer>
    <experiments>4</experiments>
</comment>
<comment type="interaction">
    <interactant intactId="EBI-4424563">
        <id>Q93Z00</id>
    </interactant>
    <interactant intactId="EBI-9838050">
        <id>A0A088QTX9</id>
        <label>OEC45</label>
    </interactant>
    <organismsDiffer>true</organismsDiffer>
    <experiments>4</experiments>
</comment>
<comment type="subcellular location">
    <subcellularLocation>
        <location evidence="1 10 12">Nucleus</location>
    </subcellularLocation>
    <text evidence="10 12">Localizes in sub-nuclear foci.</text>
</comment>
<comment type="tissue specificity">
    <text evidence="3 4">Expressed in the vascular tissues of the embryo (PubMed:17953649). Expressed in young proliferating tissues (PubMed:21668538).</text>
</comment>
<comment type="induction">
    <text evidence="3">Induced during seed imbibition (PubMed:17953649). Circadian-regulation with the lowest expression in the middle of the dark period (PubMed:17953649).</text>
</comment>
<comment type="PTM">
    <text evidence="10 17">Ubiquitinated (Probable). Targeted for degradation by the SCF(COI1) E3 ubiquitin ligase-proteasome pathway during jasmonate signaling in response to Pseudomonas syringae infection and the secreted type III effector HopBB1 (PubMed:28132837).</text>
</comment>
<comment type="disruption phenotype">
    <text evidence="3 4">Delayed germination (PubMed:17953649). No visible phenotype under normal growth conditions, but the double mutant plants tcp14 and tcp15 exhibit reduction in inflorescence height and pedicel length (PubMed:21668538).</text>
</comment>
<comment type="miscellaneous">
    <text evidence="6 10">Plants overexpressing TCP14 exhibit altered plant development and occasionally are lethal (PubMed:22267487). Plants overexpressing TCP14 are modestly reduced in size and exhibit enhanced resistance to the bacterial pathogen Pseudomonas syringae pv tomato strain DC3000, and the oomycete Hyaloperonospora arabidopsidis (PubMed:28132837).</text>
</comment>
<comment type="sequence caution" evidence="16">
    <conflict type="erroneous initiation">
        <sequence resource="EMBL-CDS" id="CAB61988"/>
    </conflict>
    <text>Truncated N-terminus.</text>
</comment>
<sequence length="489" mass="52300">MQKPTSSILNVIMDGGDSVGGGGGDDHHRHLHHHHRPTFPFQLLGKHDPDDNHQQQPSPSSSSSLFSLHQHQQLSQSQPQSQSQKSQPQTTQKELLQTQEESAVVAAKKPPLKRASTKDRHTKVDGRGRRIRMPALCAARVFQLTRELGHKSDGETIEWLLQQAEPSVIAATGTGTIPANFTSLNISLRSSGSSMSLPSHFRSAASTFSPNNIFSPAMLQQQQQQQRGGGVGFHHPHLQGRAPTSSLFPGIDNFTPTTSFLNFHNPTKQEGDQDSEELNSEKKRRIQTTSDLHQQQQQHQHDQIGGYTLQSSNSGSTATAAAAQQIPGNFWMVAAAAAAGGGGGNNNQTGGLMTASIGTGGGGGEPVWTFPSINTAAAALYRSGVSGVPSGAVSSGLHFMNFAAPMAFLTGQQQLATTSNHEINEDSNNNEGGRSDGGGDHHNTQRHHHHQQQHHHNILSGLNQYGRQVSGDSQASGSLGGGDEEDQQD</sequence>
<reference key="1">
    <citation type="journal article" date="2000" name="Nature">
        <title>Sequence and analysis of chromosome 3 of the plant Arabidopsis thaliana.</title>
        <authorList>
            <person name="Salanoubat M."/>
            <person name="Lemcke K."/>
            <person name="Rieger M."/>
            <person name="Ansorge W."/>
            <person name="Unseld M."/>
            <person name="Fartmann B."/>
            <person name="Valle G."/>
            <person name="Bloecker H."/>
            <person name="Perez-Alonso M."/>
            <person name="Obermaier B."/>
            <person name="Delseny M."/>
            <person name="Boutry M."/>
            <person name="Grivell L.A."/>
            <person name="Mache R."/>
            <person name="Puigdomenech P."/>
            <person name="De Simone V."/>
            <person name="Choisne N."/>
            <person name="Artiguenave F."/>
            <person name="Robert C."/>
            <person name="Brottier P."/>
            <person name="Wincker P."/>
            <person name="Cattolico L."/>
            <person name="Weissenbach J."/>
            <person name="Saurin W."/>
            <person name="Quetier F."/>
            <person name="Schaefer M."/>
            <person name="Mueller-Auer S."/>
            <person name="Gabel C."/>
            <person name="Fuchs M."/>
            <person name="Benes V."/>
            <person name="Wurmbach E."/>
            <person name="Drzonek H."/>
            <person name="Erfle H."/>
            <person name="Jordan N."/>
            <person name="Bangert S."/>
            <person name="Wiedelmann R."/>
            <person name="Kranz H."/>
            <person name="Voss H."/>
            <person name="Holland R."/>
            <person name="Brandt P."/>
            <person name="Nyakatura G."/>
            <person name="Vezzi A."/>
            <person name="D'Angelo M."/>
            <person name="Pallavicini A."/>
            <person name="Toppo S."/>
            <person name="Simionati B."/>
            <person name="Conrad A."/>
            <person name="Hornischer K."/>
            <person name="Kauer G."/>
            <person name="Loehnert T.-H."/>
            <person name="Nordsiek G."/>
            <person name="Reichelt J."/>
            <person name="Scharfe M."/>
            <person name="Schoen O."/>
            <person name="Bargues M."/>
            <person name="Terol J."/>
            <person name="Climent J."/>
            <person name="Navarro P."/>
            <person name="Collado C."/>
            <person name="Perez-Perez A."/>
            <person name="Ottenwaelder B."/>
            <person name="Duchemin D."/>
            <person name="Cooke R."/>
            <person name="Laudie M."/>
            <person name="Berger-Llauro C."/>
            <person name="Purnelle B."/>
            <person name="Masuy D."/>
            <person name="de Haan M."/>
            <person name="Maarse A.C."/>
            <person name="Alcaraz J.-P."/>
            <person name="Cottet A."/>
            <person name="Casacuberta E."/>
            <person name="Monfort A."/>
            <person name="Argiriou A."/>
            <person name="Flores M."/>
            <person name="Liguori R."/>
            <person name="Vitale D."/>
            <person name="Mannhaupt G."/>
            <person name="Haase D."/>
            <person name="Schoof H."/>
            <person name="Rudd S."/>
            <person name="Zaccaria P."/>
            <person name="Mewes H.-W."/>
            <person name="Mayer K.F.X."/>
            <person name="Kaul S."/>
            <person name="Town C.D."/>
            <person name="Koo H.L."/>
            <person name="Tallon L.J."/>
            <person name="Jenkins J."/>
            <person name="Rooney T."/>
            <person name="Rizzo M."/>
            <person name="Walts A."/>
            <person name="Utterback T."/>
            <person name="Fujii C.Y."/>
            <person name="Shea T.P."/>
            <person name="Creasy T.H."/>
            <person name="Haas B."/>
            <person name="Maiti R."/>
            <person name="Wu D."/>
            <person name="Peterson J."/>
            <person name="Van Aken S."/>
            <person name="Pai G."/>
            <person name="Militscher J."/>
            <person name="Sellers P."/>
            <person name="Gill J.E."/>
            <person name="Feldblyum T.V."/>
            <person name="Preuss D."/>
            <person name="Lin X."/>
            <person name="Nierman W.C."/>
            <person name="Salzberg S.L."/>
            <person name="White O."/>
            <person name="Venter J.C."/>
            <person name="Fraser C.M."/>
            <person name="Kaneko T."/>
            <person name="Nakamura Y."/>
            <person name="Sato S."/>
            <person name="Kato T."/>
            <person name="Asamizu E."/>
            <person name="Sasamoto S."/>
            <person name="Kimura T."/>
            <person name="Idesawa K."/>
            <person name="Kawashima K."/>
            <person name="Kishida Y."/>
            <person name="Kiyokawa C."/>
            <person name="Kohara M."/>
            <person name="Matsumoto M."/>
            <person name="Matsuno A."/>
            <person name="Muraki A."/>
            <person name="Nakayama S."/>
            <person name="Nakazaki N."/>
            <person name="Shinpo S."/>
            <person name="Takeuchi C."/>
            <person name="Wada T."/>
            <person name="Watanabe A."/>
            <person name="Yamada M."/>
            <person name="Yasuda M."/>
            <person name="Tabata S."/>
        </authorList>
    </citation>
    <scope>NUCLEOTIDE SEQUENCE [LARGE SCALE GENOMIC DNA]</scope>
    <source>
        <strain>cv. Columbia</strain>
    </source>
</reference>
<reference key="2">
    <citation type="journal article" date="2017" name="Plant J.">
        <title>Araport11: a complete reannotation of the Arabidopsis thaliana reference genome.</title>
        <authorList>
            <person name="Cheng C.Y."/>
            <person name="Krishnakumar V."/>
            <person name="Chan A.P."/>
            <person name="Thibaud-Nissen F."/>
            <person name="Schobel S."/>
            <person name="Town C.D."/>
        </authorList>
    </citation>
    <scope>GENOME REANNOTATION</scope>
    <source>
        <strain>cv. Columbia</strain>
    </source>
</reference>
<reference key="3">
    <citation type="journal article" date="2003" name="Science">
        <title>Empirical analysis of transcriptional activity in the Arabidopsis genome.</title>
        <authorList>
            <person name="Yamada K."/>
            <person name="Lim J."/>
            <person name="Dale J.M."/>
            <person name="Chen H."/>
            <person name="Shinn P."/>
            <person name="Palm C.J."/>
            <person name="Southwick A.M."/>
            <person name="Wu H.C."/>
            <person name="Kim C.J."/>
            <person name="Nguyen M."/>
            <person name="Pham P.K."/>
            <person name="Cheuk R.F."/>
            <person name="Karlin-Newmann G."/>
            <person name="Liu S.X."/>
            <person name="Lam B."/>
            <person name="Sakano H."/>
            <person name="Wu T."/>
            <person name="Yu G."/>
            <person name="Miranda M."/>
            <person name="Quach H.L."/>
            <person name="Tripp M."/>
            <person name="Chang C.H."/>
            <person name="Lee J.M."/>
            <person name="Toriumi M.J."/>
            <person name="Chan M.M."/>
            <person name="Tang C.C."/>
            <person name="Onodera C.S."/>
            <person name="Deng J.M."/>
            <person name="Akiyama K."/>
            <person name="Ansari Y."/>
            <person name="Arakawa T."/>
            <person name="Banh J."/>
            <person name="Banno F."/>
            <person name="Bowser L."/>
            <person name="Brooks S.Y."/>
            <person name="Carninci P."/>
            <person name="Chao Q."/>
            <person name="Choy N."/>
            <person name="Enju A."/>
            <person name="Goldsmith A.D."/>
            <person name="Gurjal M."/>
            <person name="Hansen N.F."/>
            <person name="Hayashizaki Y."/>
            <person name="Johnson-Hopson C."/>
            <person name="Hsuan V.W."/>
            <person name="Iida K."/>
            <person name="Karnes M."/>
            <person name="Khan S."/>
            <person name="Koesema E."/>
            <person name="Ishida J."/>
            <person name="Jiang P.X."/>
            <person name="Jones T."/>
            <person name="Kawai J."/>
            <person name="Kamiya A."/>
            <person name="Meyers C."/>
            <person name="Nakajima M."/>
            <person name="Narusaka M."/>
            <person name="Seki M."/>
            <person name="Sakurai T."/>
            <person name="Satou M."/>
            <person name="Tamse R."/>
            <person name="Vaysberg M."/>
            <person name="Wallender E.K."/>
            <person name="Wong C."/>
            <person name="Yamamura Y."/>
            <person name="Yuan S."/>
            <person name="Shinozaki K."/>
            <person name="Davis R.W."/>
            <person name="Theologis A."/>
            <person name="Ecker J.R."/>
        </authorList>
    </citation>
    <scope>NUCLEOTIDE SEQUENCE [LARGE SCALE MRNA]</scope>
    <source>
        <strain>cv. Columbia</strain>
    </source>
</reference>
<reference key="4">
    <citation type="journal article" date="2007" name="Plant Cell">
        <title>Arabidopsis BRANCHED1 acts as an integrator of branching signals within axillary buds.</title>
        <authorList>
            <person name="Aguilar-Martinez J.A."/>
            <person name="Poza-Carrion C."/>
            <person name="Cubas P."/>
        </authorList>
    </citation>
    <scope>GENE FAMILY</scope>
    <scope>NOMENCLATURE</scope>
</reference>
<reference key="5">
    <citation type="journal article" date="2008" name="Plant J.">
        <title>Transcription factor AtTCP14 regulates embryonic growth potential during seed germination in Arabidopsis thaliana.</title>
        <authorList>
            <person name="Tatematsu K."/>
            <person name="Nakabayashi K."/>
            <person name="Kamiya Y."/>
            <person name="Nambara E."/>
        </authorList>
    </citation>
    <scope>FUNCTION</scope>
    <scope>TISSUE SPECIFICITY</scope>
    <scope>INDUCTION</scope>
    <scope>DISRUPTION PHENOTYPE</scope>
</reference>
<reference key="6">
    <citation type="journal article" date="2010" name="Plant Cell">
        <title>TCP transcription factors link the regulation of genes encoding mitochondrial proteins with the circadian clock in Arabidopsis thaliana.</title>
        <authorList>
            <person name="Giraud E."/>
            <person name="Ng S."/>
            <person name="Carrie C."/>
            <person name="Duncan O."/>
            <person name="Low J."/>
            <person name="Lee C.P."/>
            <person name="Van Aken O."/>
            <person name="Millar A.H."/>
            <person name="Murcha M."/>
            <person name="Whelan J."/>
        </authorList>
    </citation>
    <scope>INDUCTION</scope>
</reference>
<reference key="7">
    <citation type="journal article" date="2011" name="Plant J.">
        <title>TCP14 and TCP15 affect internode length and leaf shape in Arabidopsis.</title>
        <authorList>
            <person name="Kieffer M."/>
            <person name="Master V."/>
            <person name="Waites R."/>
            <person name="Davies B."/>
        </authorList>
    </citation>
    <scope>FUNCTION</scope>
    <scope>TISSUE SPECIFICITY</scope>
    <scope>DISRUPTION PHENOTYPE</scope>
</reference>
<reference key="8">
    <citation type="journal article" date="2012" name="J. Exp. Bot.">
        <title>Arabidopsis thaliana DOF6 negatively affects germination in non-after-ripened seeds and interacts with TCP14.</title>
        <authorList>
            <person name="Rueda-Romero P."/>
            <person name="Barrero-Sicilia C."/>
            <person name="Gomez-Cadenas A."/>
            <person name="Carbonero P."/>
            <person name="Onate-Sanchez L."/>
        </authorList>
    </citation>
    <scope>FUNCTION</scope>
    <scope>INTERACTION WITH DOF3.2</scope>
</reference>
<reference key="9">
    <citation type="journal article" date="2012" name="Plant Cell">
        <title>The Arabidopsis O-linked N-acetylglucosamine transferase SPINDLY interacts with class I TCPs to facilitate cytokinin responses in leaves and flowers.</title>
        <authorList>
            <person name="Steiner E."/>
            <person name="Efroni I."/>
            <person name="Gopalraj M."/>
            <person name="Saathoff K."/>
            <person name="Tseng T.S."/>
            <person name="Kieffer M."/>
            <person name="Eshed Y."/>
            <person name="Olszewski N."/>
            <person name="Weiss D."/>
        </authorList>
    </citation>
    <scope>FUNCTION</scope>
    <scope>INTERACTION WITH SEC AND SPY</scope>
</reference>
<reference key="10">
    <citation type="journal article" date="2014" name="Plant J.">
        <title>The Arabidopsis immune adaptor SRFR1 interacts with TCP transcription factors that redundantly contribute to effector-triggered immunity.</title>
        <authorList>
            <person name="Kim S.H."/>
            <person name="Son G.H."/>
            <person name="Bhattacharjee S."/>
            <person name="Kim H.J."/>
            <person name="Nam J.C."/>
            <person name="Nguyen P.D."/>
            <person name="Hong J.C."/>
            <person name="Gassmann W."/>
        </authorList>
    </citation>
    <scope>FUNCTION</scope>
    <scope>INTERACTION WITH SRFR1</scope>
</reference>
<reference key="11">
    <citation type="journal article" date="2015" name="Mol. Plant">
        <title>TCP14 and TCP15 mediate the promotion of seed germination by gibberellins in Arabidopsis thaliana.</title>
        <authorList>
            <person name="Resentini F."/>
            <person name="Felipo-Benavent A."/>
            <person name="Colombo L."/>
            <person name="Blazquez M.A."/>
            <person name="Alabadi D."/>
            <person name="Masiero S."/>
        </authorList>
    </citation>
    <scope>FUNCTION</scope>
    <scope>INTERACTION WITH GAI AND RGL2</scope>
</reference>
<reference key="12">
    <citation type="journal article" date="2015" name="Plant Cell">
        <title>The ubiquitin receptors DA1, DAR1, and DAR2 redundantly regulate endoreduplication by modulating the stability of TCP14/15 in Arabidopsis.</title>
        <authorList>
            <person name="Peng Y."/>
            <person name="Chen L."/>
            <person name="Lu Y."/>
            <person name="Wu Y."/>
            <person name="Dumenil J."/>
            <person name="Zhu Z."/>
            <person name="Bevan M.W."/>
            <person name="Li Y."/>
        </authorList>
    </citation>
    <scope>FUNCTION</scope>
    <scope>INTERACTION WITH DA1; DAR1 AND DAR2</scope>
</reference>
<reference key="13">
    <citation type="journal article" date="2017" name="Cell Host Microbe">
        <title>Pseudomonas syringae Type III Effector HopBB1 Promotes Host Transcriptional Repressor Degradation to Regulate Phytohormone Responses and Virulence.</title>
        <authorList>
            <person name="Yang L."/>
            <person name="Teixeira P.J."/>
            <person name="Biswas S."/>
            <person name="Finkel O.M."/>
            <person name="He Y."/>
            <person name="Salas-Gonzalez I."/>
            <person name="English M.E."/>
            <person name="Epple P."/>
            <person name="Mieczkowski P."/>
            <person name="Dangl J.L."/>
        </authorList>
    </citation>
    <scope>FUNCTION</scope>
    <scope>INTERACTION WITH THE PSEUDOMONAS SYRINGAE TYPE III EFFECTOR HOPBB1</scope>
    <scope>SUBCELLULAR LOCATION</scope>
    <scope>UBIQUITINATION</scope>
    <scope>MUTAGENESIS OF 202-ARG--THR-207</scope>
</reference>
<reference key="14">
    <citation type="journal article" date="2017" name="Front. Plant Sci.">
        <title>Arabidopsis TCP transcription factors interact with the SUMO conjugating machinery in nuclear foci.</title>
        <authorList>
            <person name="Mazur M.J."/>
            <person name="Spears B.J."/>
            <person name="Djajasaputra A."/>
            <person name="van der Gragt M."/>
            <person name="Vlachakis G."/>
            <person name="Beerens B."/>
            <person name="Gassmann W."/>
            <person name="van den Burg H.A."/>
        </authorList>
    </citation>
    <scope>INTERACTION WITH SCE1</scope>
    <scope>SUBCELLULAR LOCATION</scope>
</reference>
<reference key="15">
    <citation type="journal article" date="2018" name="Plant J.">
        <title>MOS1 functions closely with TCP transcription factors to modulate immunity and cell cycle in Arabidopsis.</title>
        <authorList>
            <person name="Zhang N."/>
            <person name="Wang Z."/>
            <person name="Bao Z."/>
            <person name="Yang L."/>
            <person name="Wu D."/>
            <person name="Shu X."/>
            <person name="Hua J."/>
        </authorList>
    </citation>
    <scope>INTERACTION WITH MOS1</scope>
</reference>
<reference key="16">
    <citation type="journal article" date="2019" name="Plant Cell">
        <title>ORANGE represses chloroplast biogenesis in etiolated Arabidopsis cotyledons via interaction with TCP14.</title>
        <authorList>
            <person name="Sun T."/>
            <person name="Zhou F."/>
            <person name="Huang X.-Q."/>
            <person name="Chen W.-C."/>
            <person name="Kong M.-J."/>
            <person name="Zhou C.-F."/>
            <person name="Zhuang Z."/>
            <person name="Li L."/>
            <person name="Lu S."/>
        </authorList>
    </citation>
    <scope>FUNCTION</scope>
    <scope>INTERACTION WITH OR</scope>
    <source>
        <strain>cv. Columbia</strain>
    </source>
</reference>